<sequence>MQSKFIVIEGLDGAGKSTAISFVRKYLEKNNLAAIYTREPGGTKIAEELRNLVLHNKYDEEIHSDSELLMIYAGRVQHYRNLIAPALEKGINVVSDRFYWSSMAYQGGGRGVELSKIRALNDNFLNGCEPDLVIYLDIDPILGLQRAQKVGSPDRIEKAGLEFFNRTRKVFKDLVKDSDNAIEIDAAKSIQEVEKQIYLILDKHFNFQN</sequence>
<comment type="function">
    <text evidence="1">Phosphorylation of dTMP to form dTDP in both de novo and salvage pathways of dTTP synthesis.</text>
</comment>
<comment type="catalytic activity">
    <reaction evidence="1">
        <text>dTMP + ATP = dTDP + ADP</text>
        <dbReference type="Rhea" id="RHEA:13517"/>
        <dbReference type="ChEBI" id="CHEBI:30616"/>
        <dbReference type="ChEBI" id="CHEBI:58369"/>
        <dbReference type="ChEBI" id="CHEBI:63528"/>
        <dbReference type="ChEBI" id="CHEBI:456216"/>
        <dbReference type="EC" id="2.7.4.9"/>
    </reaction>
</comment>
<comment type="similarity">
    <text evidence="1">Belongs to the thymidylate kinase family.</text>
</comment>
<organism>
    <name type="scientific">Francisella tularensis subsp. tularensis (strain FSC 198)</name>
    <dbReference type="NCBI Taxonomy" id="393115"/>
    <lineage>
        <taxon>Bacteria</taxon>
        <taxon>Pseudomonadati</taxon>
        <taxon>Pseudomonadota</taxon>
        <taxon>Gammaproteobacteria</taxon>
        <taxon>Thiotrichales</taxon>
        <taxon>Francisellaceae</taxon>
        <taxon>Francisella</taxon>
    </lineage>
</organism>
<proteinExistence type="inferred from homology"/>
<evidence type="ECO:0000255" key="1">
    <source>
        <dbReference type="HAMAP-Rule" id="MF_00165"/>
    </source>
</evidence>
<name>KTHY_FRAT1</name>
<accession>Q14JV8</accession>
<keyword id="KW-0067">ATP-binding</keyword>
<keyword id="KW-0418">Kinase</keyword>
<keyword id="KW-0545">Nucleotide biosynthesis</keyword>
<keyword id="KW-0547">Nucleotide-binding</keyword>
<keyword id="KW-0808">Transferase</keyword>
<feature type="chain" id="PRO_1000023192" description="Thymidylate kinase">
    <location>
        <begin position="1"/>
        <end position="209"/>
    </location>
</feature>
<feature type="binding site" evidence="1">
    <location>
        <begin position="10"/>
        <end position="17"/>
    </location>
    <ligand>
        <name>ATP</name>
        <dbReference type="ChEBI" id="CHEBI:30616"/>
    </ligand>
</feature>
<reference key="1">
    <citation type="journal article" date="2007" name="PLoS ONE">
        <title>Genome sequencing shows that European isolates of Francisella tularensis subspecies tularensis are almost identical to US laboratory strain Schu S4.</title>
        <authorList>
            <person name="Chaudhuri R.R."/>
            <person name="Ren C.-P."/>
            <person name="Desmond L."/>
            <person name="Vincent G.A."/>
            <person name="Silman N.J."/>
            <person name="Brehm J.K."/>
            <person name="Elmore M.J."/>
            <person name="Hudson M.J."/>
            <person name="Forsman M."/>
            <person name="Isherwood K.E."/>
            <person name="Gurycova D."/>
            <person name="Minton N.P."/>
            <person name="Titball R.W."/>
            <person name="Pallen M.J."/>
            <person name="Vipond R."/>
        </authorList>
    </citation>
    <scope>NUCLEOTIDE SEQUENCE [LARGE SCALE GENOMIC DNA]</scope>
    <source>
        <strain>FSC 198</strain>
    </source>
</reference>
<gene>
    <name evidence="1" type="primary">tmk</name>
    <name type="ordered locus">FTF0117</name>
</gene>
<dbReference type="EC" id="2.7.4.9" evidence="1"/>
<dbReference type="EMBL" id="AM286280">
    <property type="protein sequence ID" value="CAL08133.1"/>
    <property type="molecule type" value="Genomic_DNA"/>
</dbReference>
<dbReference type="RefSeq" id="WP_003019864.1">
    <property type="nucleotide sequence ID" value="NC_008245.1"/>
</dbReference>
<dbReference type="SMR" id="Q14JV8"/>
<dbReference type="KEGG" id="ftf:FTF0117"/>
<dbReference type="HOGENOM" id="CLU_049131_0_1_6"/>
<dbReference type="GO" id="GO:0005829">
    <property type="term" value="C:cytosol"/>
    <property type="evidence" value="ECO:0007669"/>
    <property type="project" value="TreeGrafter"/>
</dbReference>
<dbReference type="GO" id="GO:0005524">
    <property type="term" value="F:ATP binding"/>
    <property type="evidence" value="ECO:0007669"/>
    <property type="project" value="UniProtKB-UniRule"/>
</dbReference>
<dbReference type="GO" id="GO:0004798">
    <property type="term" value="F:dTMP kinase activity"/>
    <property type="evidence" value="ECO:0007669"/>
    <property type="project" value="UniProtKB-UniRule"/>
</dbReference>
<dbReference type="GO" id="GO:0006233">
    <property type="term" value="P:dTDP biosynthetic process"/>
    <property type="evidence" value="ECO:0007669"/>
    <property type="project" value="InterPro"/>
</dbReference>
<dbReference type="GO" id="GO:0006235">
    <property type="term" value="P:dTTP biosynthetic process"/>
    <property type="evidence" value="ECO:0007669"/>
    <property type="project" value="UniProtKB-UniRule"/>
</dbReference>
<dbReference type="GO" id="GO:0006227">
    <property type="term" value="P:dUDP biosynthetic process"/>
    <property type="evidence" value="ECO:0007669"/>
    <property type="project" value="TreeGrafter"/>
</dbReference>
<dbReference type="CDD" id="cd01672">
    <property type="entry name" value="TMPK"/>
    <property type="match status" value="1"/>
</dbReference>
<dbReference type="FunFam" id="3.40.50.300:FF:000225">
    <property type="entry name" value="Thymidylate kinase"/>
    <property type="match status" value="1"/>
</dbReference>
<dbReference type="Gene3D" id="3.40.50.300">
    <property type="entry name" value="P-loop containing nucleotide triphosphate hydrolases"/>
    <property type="match status" value="1"/>
</dbReference>
<dbReference type="HAMAP" id="MF_00165">
    <property type="entry name" value="Thymidylate_kinase"/>
    <property type="match status" value="1"/>
</dbReference>
<dbReference type="InterPro" id="IPR027417">
    <property type="entry name" value="P-loop_NTPase"/>
</dbReference>
<dbReference type="InterPro" id="IPR039430">
    <property type="entry name" value="Thymidylate_kin-like_dom"/>
</dbReference>
<dbReference type="InterPro" id="IPR018095">
    <property type="entry name" value="Thymidylate_kin_CS"/>
</dbReference>
<dbReference type="InterPro" id="IPR018094">
    <property type="entry name" value="Thymidylate_kinase"/>
</dbReference>
<dbReference type="NCBIfam" id="TIGR00041">
    <property type="entry name" value="DTMP_kinase"/>
    <property type="match status" value="1"/>
</dbReference>
<dbReference type="PANTHER" id="PTHR10344">
    <property type="entry name" value="THYMIDYLATE KINASE"/>
    <property type="match status" value="1"/>
</dbReference>
<dbReference type="PANTHER" id="PTHR10344:SF4">
    <property type="entry name" value="UMP-CMP KINASE 2, MITOCHONDRIAL"/>
    <property type="match status" value="1"/>
</dbReference>
<dbReference type="Pfam" id="PF02223">
    <property type="entry name" value="Thymidylate_kin"/>
    <property type="match status" value="1"/>
</dbReference>
<dbReference type="SUPFAM" id="SSF52540">
    <property type="entry name" value="P-loop containing nucleoside triphosphate hydrolases"/>
    <property type="match status" value="1"/>
</dbReference>
<dbReference type="PROSITE" id="PS01331">
    <property type="entry name" value="THYMIDYLATE_KINASE"/>
    <property type="match status" value="1"/>
</dbReference>
<protein>
    <recommendedName>
        <fullName evidence="1">Thymidylate kinase</fullName>
        <ecNumber evidence="1">2.7.4.9</ecNumber>
    </recommendedName>
    <alternativeName>
        <fullName evidence="1">dTMP kinase</fullName>
    </alternativeName>
</protein>